<accession>Q6L1N2</accession>
<feature type="chain" id="PRO_0000139075" description="CCA-adding enzyme">
    <location>
        <begin position="1"/>
        <end position="427"/>
    </location>
</feature>
<feature type="binding site" evidence="1">
    <location>
        <position position="50"/>
    </location>
    <ligand>
        <name>ATP</name>
        <dbReference type="ChEBI" id="CHEBI:30616"/>
    </ligand>
</feature>
<feature type="binding site" evidence="1">
    <location>
        <position position="50"/>
    </location>
    <ligand>
        <name>CTP</name>
        <dbReference type="ChEBI" id="CHEBI:37563"/>
    </ligand>
</feature>
<feature type="binding site" evidence="1">
    <location>
        <position position="53"/>
    </location>
    <ligand>
        <name>ATP</name>
        <dbReference type="ChEBI" id="CHEBI:30616"/>
    </ligand>
</feature>
<feature type="binding site" evidence="1">
    <location>
        <position position="53"/>
    </location>
    <ligand>
        <name>CTP</name>
        <dbReference type="ChEBI" id="CHEBI:37563"/>
    </ligand>
</feature>
<feature type="binding site" evidence="1">
    <location>
        <position position="61"/>
    </location>
    <ligand>
        <name>Mg(2+)</name>
        <dbReference type="ChEBI" id="CHEBI:18420"/>
    </ligand>
</feature>
<feature type="binding site" evidence="1">
    <location>
        <position position="63"/>
    </location>
    <ligand>
        <name>Mg(2+)</name>
        <dbReference type="ChEBI" id="CHEBI:18420"/>
    </ligand>
</feature>
<feature type="binding site" evidence="1">
    <location>
        <position position="112"/>
    </location>
    <ligand>
        <name>Mg(2+)</name>
        <dbReference type="ChEBI" id="CHEBI:18420"/>
    </ligand>
</feature>
<feature type="binding site" evidence="1">
    <location>
        <position position="135"/>
    </location>
    <ligand>
        <name>ATP</name>
        <dbReference type="ChEBI" id="CHEBI:30616"/>
    </ligand>
</feature>
<feature type="binding site" evidence="1">
    <location>
        <position position="135"/>
    </location>
    <ligand>
        <name>CTP</name>
        <dbReference type="ChEBI" id="CHEBI:37563"/>
    </ligand>
</feature>
<feature type="binding site" evidence="1">
    <location>
        <position position="155"/>
    </location>
    <ligand>
        <name>ATP</name>
        <dbReference type="ChEBI" id="CHEBI:30616"/>
    </ligand>
</feature>
<feature type="binding site" evidence="1">
    <location>
        <position position="155"/>
    </location>
    <ligand>
        <name>CTP</name>
        <dbReference type="ChEBI" id="CHEBI:37563"/>
    </ligand>
</feature>
<feature type="binding site" evidence="1">
    <location>
        <position position="164"/>
    </location>
    <ligand>
        <name>ATP</name>
        <dbReference type="ChEBI" id="CHEBI:30616"/>
    </ligand>
</feature>
<feature type="binding site" evidence="1">
    <location>
        <position position="164"/>
    </location>
    <ligand>
        <name>CTP</name>
        <dbReference type="ChEBI" id="CHEBI:37563"/>
    </ligand>
</feature>
<evidence type="ECO:0000255" key="1">
    <source>
        <dbReference type="HAMAP-Rule" id="MF_01264"/>
    </source>
</evidence>
<organism>
    <name type="scientific">Picrophilus torridus (strain ATCC 700027 / DSM 9790 / JCM 10055 / NBRC 100828 / KAW 2/3)</name>
    <dbReference type="NCBI Taxonomy" id="1122961"/>
    <lineage>
        <taxon>Archaea</taxon>
        <taxon>Methanobacteriati</taxon>
        <taxon>Thermoplasmatota</taxon>
        <taxon>Thermoplasmata</taxon>
        <taxon>Thermoplasmatales</taxon>
        <taxon>Picrophilaceae</taxon>
        <taxon>Picrophilus</taxon>
    </lineage>
</organism>
<keyword id="KW-0067">ATP-binding</keyword>
<keyword id="KW-0460">Magnesium</keyword>
<keyword id="KW-0479">Metal-binding</keyword>
<keyword id="KW-0547">Nucleotide-binding</keyword>
<keyword id="KW-0548">Nucleotidyltransferase</keyword>
<keyword id="KW-0692">RNA repair</keyword>
<keyword id="KW-0694">RNA-binding</keyword>
<keyword id="KW-0808">Transferase</keyword>
<keyword id="KW-0819">tRNA processing</keyword>
<name>CCA_PICTO</name>
<protein>
    <recommendedName>
        <fullName evidence="1">CCA-adding enzyme</fullName>
        <ecNumber evidence="1">2.7.7.72</ecNumber>
    </recommendedName>
    <alternativeName>
        <fullName evidence="1">CCA tRNA nucleotidyltransferase</fullName>
    </alternativeName>
    <alternativeName>
        <fullName evidence="1">tRNA CCA-pyrophosphorylase</fullName>
    </alternativeName>
    <alternativeName>
        <fullName evidence="1">tRNA adenylyl-/cytidylyl- transferase</fullName>
    </alternativeName>
    <alternativeName>
        <fullName evidence="1">tRNA nucleotidyltransferase</fullName>
    </alternativeName>
    <alternativeName>
        <fullName evidence="1">tRNA-NT</fullName>
    </alternativeName>
</protein>
<dbReference type="EC" id="2.7.7.72" evidence="1"/>
<dbReference type="EMBL" id="AE017261">
    <property type="protein sequence ID" value="AAT43120.1"/>
    <property type="molecule type" value="Genomic_DNA"/>
</dbReference>
<dbReference type="RefSeq" id="WP_011177336.1">
    <property type="nucleotide sequence ID" value="NC_005877.1"/>
</dbReference>
<dbReference type="SMR" id="Q6L1N2"/>
<dbReference type="STRING" id="263820.PTO0535"/>
<dbReference type="PaxDb" id="263820-PTO0535"/>
<dbReference type="GeneID" id="2845347"/>
<dbReference type="KEGG" id="pto:PTO0535"/>
<dbReference type="PATRIC" id="fig|263820.9.peg.563"/>
<dbReference type="eggNOG" id="arCOG04249">
    <property type="taxonomic scope" value="Archaea"/>
</dbReference>
<dbReference type="HOGENOM" id="CLU_044679_1_0_2"/>
<dbReference type="InParanoid" id="Q6L1N2"/>
<dbReference type="OrthoDB" id="7378at2157"/>
<dbReference type="Proteomes" id="UP000000438">
    <property type="component" value="Chromosome"/>
</dbReference>
<dbReference type="GO" id="GO:0005524">
    <property type="term" value="F:ATP binding"/>
    <property type="evidence" value="ECO:0007669"/>
    <property type="project" value="UniProtKB-UniRule"/>
</dbReference>
<dbReference type="GO" id="GO:0004810">
    <property type="term" value="F:CCA tRNA nucleotidyltransferase activity"/>
    <property type="evidence" value="ECO:0007669"/>
    <property type="project" value="UniProtKB-UniRule"/>
</dbReference>
<dbReference type="GO" id="GO:0000287">
    <property type="term" value="F:magnesium ion binding"/>
    <property type="evidence" value="ECO:0007669"/>
    <property type="project" value="UniProtKB-UniRule"/>
</dbReference>
<dbReference type="GO" id="GO:0000049">
    <property type="term" value="F:tRNA binding"/>
    <property type="evidence" value="ECO:0007669"/>
    <property type="project" value="UniProtKB-UniRule"/>
</dbReference>
<dbReference type="GO" id="GO:0042245">
    <property type="term" value="P:RNA repair"/>
    <property type="evidence" value="ECO:0007669"/>
    <property type="project" value="UniProtKB-KW"/>
</dbReference>
<dbReference type="GO" id="GO:0001680">
    <property type="term" value="P:tRNA 3'-terminal CCA addition"/>
    <property type="evidence" value="ECO:0007669"/>
    <property type="project" value="UniProtKB-UniRule"/>
</dbReference>
<dbReference type="CDD" id="cd05400">
    <property type="entry name" value="NT_2-5OAS_ClassI-CCAase"/>
    <property type="match status" value="1"/>
</dbReference>
<dbReference type="Gene3D" id="3.30.70.1550">
    <property type="entry name" value="Archaeal tRNA CCA-adding enzyme catalytic domain"/>
    <property type="match status" value="1"/>
</dbReference>
<dbReference type="Gene3D" id="3.30.460.10">
    <property type="entry name" value="Beta Polymerase, domain 2"/>
    <property type="match status" value="1"/>
</dbReference>
<dbReference type="Gene3D" id="1.10.1410.30">
    <property type="entry name" value="CCA tRNA nucleotidyltransferase, domain 2"/>
    <property type="match status" value="1"/>
</dbReference>
<dbReference type="Gene3D" id="3.30.70.590">
    <property type="entry name" value="Poly(A) polymerase predicted RNA binding domain"/>
    <property type="match status" value="1"/>
</dbReference>
<dbReference type="HAMAP" id="MF_01264">
    <property type="entry name" value="CCA_arch"/>
    <property type="match status" value="1"/>
</dbReference>
<dbReference type="InterPro" id="IPR048833">
    <property type="entry name" value="CAA_C"/>
</dbReference>
<dbReference type="InterPro" id="IPR008229">
    <property type="entry name" value="CCA-adding_arc"/>
</dbReference>
<dbReference type="InterPro" id="IPR042090">
    <property type="entry name" value="CCA_tRNA_nucleotrans_2"/>
</dbReference>
<dbReference type="InterPro" id="IPR006116">
    <property type="entry name" value="NT_2-5OAS_ClassI-CCAase"/>
</dbReference>
<dbReference type="InterPro" id="IPR043519">
    <property type="entry name" value="NT_sf"/>
</dbReference>
<dbReference type="InterPro" id="IPR011068">
    <property type="entry name" value="NuclTrfase_I-like_C"/>
</dbReference>
<dbReference type="InterPro" id="IPR002934">
    <property type="entry name" value="Polymerase_NTP_transf_dom"/>
</dbReference>
<dbReference type="InterPro" id="IPR015329">
    <property type="entry name" value="tRNA_NucTransf2"/>
</dbReference>
<dbReference type="NCBIfam" id="TIGR03671">
    <property type="entry name" value="cca_archaeal"/>
    <property type="match status" value="1"/>
</dbReference>
<dbReference type="PANTHER" id="PTHR39643">
    <property type="entry name" value="CCA-ADDING ENZYME"/>
    <property type="match status" value="1"/>
</dbReference>
<dbReference type="PANTHER" id="PTHR39643:SF1">
    <property type="entry name" value="CCA-ADDING ENZYME"/>
    <property type="match status" value="1"/>
</dbReference>
<dbReference type="Pfam" id="PF21133">
    <property type="entry name" value="CAA_C"/>
    <property type="match status" value="1"/>
</dbReference>
<dbReference type="Pfam" id="PF01909">
    <property type="entry name" value="NTP_transf_2"/>
    <property type="match status" value="1"/>
</dbReference>
<dbReference type="Pfam" id="PF09249">
    <property type="entry name" value="tRNA_NucTransf2"/>
    <property type="match status" value="1"/>
</dbReference>
<dbReference type="PIRSF" id="PIRSF005335">
    <property type="entry name" value="CCA_arch"/>
    <property type="match status" value="1"/>
</dbReference>
<dbReference type="SUPFAM" id="SSF81301">
    <property type="entry name" value="Nucleotidyltransferase"/>
    <property type="match status" value="1"/>
</dbReference>
<dbReference type="SUPFAM" id="SSF55003">
    <property type="entry name" value="PAP/Archaeal CCA-adding enzyme, C-terminal domain"/>
    <property type="match status" value="1"/>
</dbReference>
<dbReference type="SUPFAM" id="SSF81631">
    <property type="entry name" value="PAP/OAS1 substrate-binding domain"/>
    <property type="match status" value="1"/>
</dbReference>
<reference key="1">
    <citation type="journal article" date="2004" name="Proc. Natl. Acad. Sci. U.S.A.">
        <title>Genome sequence of Picrophilus torridus and its implications for life around pH 0.</title>
        <authorList>
            <person name="Fuetterer O."/>
            <person name="Angelov A."/>
            <person name="Liesegang H."/>
            <person name="Gottschalk G."/>
            <person name="Schleper C."/>
            <person name="Schepers B."/>
            <person name="Dock C."/>
            <person name="Antranikian G."/>
            <person name="Liebl W."/>
        </authorList>
    </citation>
    <scope>NUCLEOTIDE SEQUENCE [LARGE SCALE GENOMIC DNA]</scope>
    <source>
        <strain>ATCC 700027 / DSM 9790 / JCM 10055 / NBRC 100828 / KAW 2/3</strain>
    </source>
</reference>
<comment type="function">
    <text evidence="1">Catalyzes the addition and repair of the essential 3'-terminal CCA sequence in tRNAs without using a nucleic acid template. Adds these three nucleotides in the order of C, C, and A to the tRNA nucleotide-73, using CTP and ATP as substrates and producing inorganic pyrophosphate. tRNA 3'-terminal CCA addition is required both for tRNA processing and repair. Also involved in tRNA surveillance by mediating tandem CCA addition to generate a CCACCA at the 3' terminus of unstable tRNAs. While stable tRNAs receive only 3'-terminal CCA, unstable tRNAs are marked with CCACCA and rapidly degraded.</text>
</comment>
<comment type="catalytic activity">
    <reaction evidence="1">
        <text>a tRNA precursor + 2 CTP + ATP = a tRNA with a 3' CCA end + 3 diphosphate</text>
        <dbReference type="Rhea" id="RHEA:14433"/>
        <dbReference type="Rhea" id="RHEA-COMP:10465"/>
        <dbReference type="Rhea" id="RHEA-COMP:10468"/>
        <dbReference type="ChEBI" id="CHEBI:30616"/>
        <dbReference type="ChEBI" id="CHEBI:33019"/>
        <dbReference type="ChEBI" id="CHEBI:37563"/>
        <dbReference type="ChEBI" id="CHEBI:74896"/>
        <dbReference type="ChEBI" id="CHEBI:83071"/>
        <dbReference type="EC" id="2.7.7.72"/>
    </reaction>
</comment>
<comment type="catalytic activity">
    <reaction evidence="1">
        <text>a tRNA with a 3' CCA end + 2 CTP + ATP = a tRNA with a 3' CCACCA end + 3 diphosphate</text>
        <dbReference type="Rhea" id="RHEA:76235"/>
        <dbReference type="Rhea" id="RHEA-COMP:10468"/>
        <dbReference type="Rhea" id="RHEA-COMP:18655"/>
        <dbReference type="ChEBI" id="CHEBI:30616"/>
        <dbReference type="ChEBI" id="CHEBI:33019"/>
        <dbReference type="ChEBI" id="CHEBI:37563"/>
        <dbReference type="ChEBI" id="CHEBI:83071"/>
        <dbReference type="ChEBI" id="CHEBI:195187"/>
    </reaction>
    <physiologicalReaction direction="left-to-right" evidence="1">
        <dbReference type="Rhea" id="RHEA:76236"/>
    </physiologicalReaction>
</comment>
<comment type="cofactor">
    <cofactor evidence="1">
        <name>Mg(2+)</name>
        <dbReference type="ChEBI" id="CHEBI:18420"/>
    </cofactor>
</comment>
<comment type="subunit">
    <text evidence="1">Homodimer.</text>
</comment>
<comment type="miscellaneous">
    <text evidence="1">A single active site specifically recognizes both ATP and CTP and is responsible for their addition.</text>
</comment>
<comment type="similarity">
    <text evidence="1">Belongs to the tRNA nucleotidyltransferase/poly(A) polymerase family. Archaeal CCA-adding enzyme subfamily.</text>
</comment>
<sequence>MIDYKKILGDYTPDYEESLRLKCIENGIIKKLNDIISSRNIDAEPVSVGSYSKGTNLKNSDLDIFIVFSKKYPKNEMESIGLSLGHYILENGVEKYAEHPYVSGYIENVKIDIVPAYKIEPGQRIVSTVDRTPLHTKYVIENTDENLRNDIRLLKIFMKANNVYGSEVSKAGFSGYLCEILVINFKSFDAVIKYFSKLKGRLIIPENSGKKFQEPVVIVDPVDPTRNAGAAVSLENLSRMKIASKLFLLNKNESFFYPREISPRYHKRGTCIYIITLKRPDIIDDIIYPQVFRFERQIFNIADRYGFMPVSSEINVDNNIEILIELQRDVLPDVSKHAGPPVDSDESINFINVWKDRALRGPYIERDRLYVDSETRIKSFYDALNLELKKMDIGKNLNKLKDGIKIIKYNNSDFNVVKKFFSKDIFH</sequence>
<gene>
    <name evidence="1" type="primary">cca</name>
    <name type="ordered locus">PTO0535</name>
</gene>
<proteinExistence type="inferred from homology"/>